<reference key="1">
    <citation type="submission" date="2006-10" db="EMBL/GenBank/DDBJ databases">
        <authorList>
            <person name="Fleischmann R.D."/>
            <person name="Dodson R.J."/>
            <person name="Haft D.H."/>
            <person name="Merkel J.S."/>
            <person name="Nelson W.C."/>
            <person name="Fraser C.M."/>
        </authorList>
    </citation>
    <scope>NUCLEOTIDE SEQUENCE [LARGE SCALE GENOMIC DNA]</scope>
    <source>
        <strain>ATCC 700084 / mc(2)155</strain>
    </source>
</reference>
<reference key="2">
    <citation type="journal article" date="2007" name="Genome Biol.">
        <title>Interrupted coding sequences in Mycobacterium smegmatis: authentic mutations or sequencing errors?</title>
        <authorList>
            <person name="Deshayes C."/>
            <person name="Perrodou E."/>
            <person name="Gallien S."/>
            <person name="Euphrasie D."/>
            <person name="Schaeffer C."/>
            <person name="Van-Dorsselaer A."/>
            <person name="Poch O."/>
            <person name="Lecompte O."/>
            <person name="Reyrat J.-M."/>
        </authorList>
    </citation>
    <scope>NUCLEOTIDE SEQUENCE [LARGE SCALE GENOMIC DNA]</scope>
    <source>
        <strain>ATCC 700084 / mc(2)155</strain>
    </source>
</reference>
<reference key="3">
    <citation type="journal article" date="2009" name="Genome Res.">
        <title>Ortho-proteogenomics: multiple proteomes investigation through orthology and a new MS-based protocol.</title>
        <authorList>
            <person name="Gallien S."/>
            <person name="Perrodou E."/>
            <person name="Carapito C."/>
            <person name="Deshayes C."/>
            <person name="Reyrat J.-M."/>
            <person name="Van Dorsselaer A."/>
            <person name="Poch O."/>
            <person name="Schaeffer C."/>
            <person name="Lecompte O."/>
        </authorList>
    </citation>
    <scope>NUCLEOTIDE SEQUENCE [LARGE SCALE GENOMIC DNA]</scope>
    <source>
        <strain>ATCC 700084 / mc(2)155</strain>
    </source>
</reference>
<protein>
    <recommendedName>
        <fullName evidence="1">Phospho-N-acetylmuramoyl-pentapeptide-transferase</fullName>
        <ecNumber evidence="1">2.7.8.13</ecNumber>
    </recommendedName>
    <alternativeName>
        <fullName evidence="1">UDP-MurNAc-pentapeptide phosphotransferase</fullName>
    </alternativeName>
</protein>
<keyword id="KW-0131">Cell cycle</keyword>
<keyword id="KW-0132">Cell division</keyword>
<keyword id="KW-1003">Cell membrane</keyword>
<keyword id="KW-0133">Cell shape</keyword>
<keyword id="KW-0961">Cell wall biogenesis/degradation</keyword>
<keyword id="KW-0460">Magnesium</keyword>
<keyword id="KW-0472">Membrane</keyword>
<keyword id="KW-0479">Metal-binding</keyword>
<keyword id="KW-0573">Peptidoglycan synthesis</keyword>
<keyword id="KW-1185">Reference proteome</keyword>
<keyword id="KW-0808">Transferase</keyword>
<keyword id="KW-0812">Transmembrane</keyword>
<keyword id="KW-1133">Transmembrane helix</keyword>
<evidence type="ECO:0000255" key="1">
    <source>
        <dbReference type="HAMAP-Rule" id="MF_00038"/>
    </source>
</evidence>
<evidence type="ECO:0000305" key="2"/>
<feature type="chain" id="PRO_1000003012" description="Phospho-N-acetylmuramoyl-pentapeptide-transferase">
    <location>
        <begin position="1"/>
        <end position="359"/>
    </location>
</feature>
<feature type="transmembrane region" description="Helical" evidence="1">
    <location>
        <begin position="3"/>
        <end position="23"/>
    </location>
</feature>
<feature type="transmembrane region" description="Helical" evidence="1">
    <location>
        <begin position="55"/>
        <end position="75"/>
    </location>
</feature>
<feature type="transmembrane region" description="Helical" evidence="1">
    <location>
        <begin position="80"/>
        <end position="100"/>
    </location>
</feature>
<feature type="transmembrane region" description="Helical" evidence="1">
    <location>
        <begin position="117"/>
        <end position="137"/>
    </location>
</feature>
<feature type="transmembrane region" description="Helical" evidence="1">
    <location>
        <begin position="156"/>
        <end position="176"/>
    </location>
</feature>
<feature type="transmembrane region" description="Helical" evidence="1">
    <location>
        <begin position="187"/>
        <end position="207"/>
    </location>
</feature>
<feature type="transmembrane region" description="Helical" evidence="1">
    <location>
        <begin position="231"/>
        <end position="251"/>
    </location>
</feature>
<feature type="transmembrane region" description="Helical" evidence="1">
    <location>
        <begin position="255"/>
        <end position="275"/>
    </location>
</feature>
<feature type="transmembrane region" description="Helical" evidence="1">
    <location>
        <begin position="280"/>
        <end position="300"/>
    </location>
</feature>
<feature type="transmembrane region" description="Helical" evidence="1">
    <location>
        <begin position="334"/>
        <end position="354"/>
    </location>
</feature>
<gene>
    <name evidence="1" type="primary">mraY</name>
    <name type="ordered locus">MSMEG_4230</name>
    <name type="ordered locus">MSMEI_4130</name>
</gene>
<organism>
    <name type="scientific">Mycolicibacterium smegmatis (strain ATCC 700084 / mc(2)155)</name>
    <name type="common">Mycobacterium smegmatis</name>
    <dbReference type="NCBI Taxonomy" id="246196"/>
    <lineage>
        <taxon>Bacteria</taxon>
        <taxon>Bacillati</taxon>
        <taxon>Actinomycetota</taxon>
        <taxon>Actinomycetes</taxon>
        <taxon>Mycobacteriales</taxon>
        <taxon>Mycobacteriaceae</taxon>
        <taxon>Mycolicibacterium</taxon>
    </lineage>
</organism>
<sequence length="359" mass="37416">MMLILIAVGIALAVSILLTPALIRLFTKQGLGHEIREDGPPSHAKKRGTPSMGGVAILAGIWAGYLGSHLVGMAMGGDGPSASGLLVLGLATVLGGVGFIDDMIKLKRARNLGLNKTAKTVGQLFAAVLFGVLALQFRNGDGLTPGSAELSYVREIATVTLAPALFVLFCVVVVSAWSNAVNFTDGLDGLAAGAMAMVTAAYVLITFWQYRNACATAPGLGCYNVRDPLDLALVAAATAGACVGFLWWNAAPAKIFMGDTGSLALGGIIAGISVTSRTEILAVVLGALFVAEVTSVVVQILAFRTTGRRVFRMAPFHHHFELVGWAETQVIIRFWLLTAIACGLGVALFYGEWLTAVGA</sequence>
<comment type="function">
    <text evidence="1">Catalyzes the initial step of the lipid cycle reactions in the biosynthesis of the cell wall peptidoglycan: transfers peptidoglycan precursor phospho-MurNAc-pentapeptide from UDP-MurNAc-pentapeptide onto the lipid carrier undecaprenyl phosphate, yielding undecaprenyl-pyrophosphoryl-MurNAc-pentapeptide, known as lipid I.</text>
</comment>
<comment type="catalytic activity">
    <reaction evidence="1">
        <text>UDP-N-acetyl-alpha-D-muramoyl-L-alanyl-gamma-D-glutamyl-meso-2,6-diaminopimeloyl-D-alanyl-D-alanine + di-trans,octa-cis-undecaprenyl phosphate = di-trans,octa-cis-undecaprenyl diphospho-N-acetyl-alpha-D-muramoyl-L-alanyl-D-glutamyl-meso-2,6-diaminopimeloyl-D-alanyl-D-alanine + UMP</text>
        <dbReference type="Rhea" id="RHEA:28386"/>
        <dbReference type="ChEBI" id="CHEBI:57865"/>
        <dbReference type="ChEBI" id="CHEBI:60392"/>
        <dbReference type="ChEBI" id="CHEBI:61386"/>
        <dbReference type="ChEBI" id="CHEBI:61387"/>
        <dbReference type="EC" id="2.7.8.13"/>
    </reaction>
</comment>
<comment type="cofactor">
    <cofactor evidence="1">
        <name>Mg(2+)</name>
        <dbReference type="ChEBI" id="CHEBI:18420"/>
    </cofactor>
</comment>
<comment type="pathway">
    <text evidence="1">Cell wall biogenesis; peptidoglycan biosynthesis.</text>
</comment>
<comment type="subcellular location">
    <subcellularLocation>
        <location evidence="1">Cell membrane</location>
        <topology evidence="1">Multi-pass membrane protein</topology>
    </subcellularLocation>
</comment>
<comment type="similarity">
    <text evidence="1">Belongs to the glycosyltransferase 4 family. MraY subfamily.</text>
</comment>
<comment type="sequence caution" evidence="2">
    <conflict type="erroneous initiation">
        <sequence resource="EMBL-CDS" id="AFP40587"/>
    </conflict>
    <text>Truncated N-terminus.</text>
</comment>
<dbReference type="EC" id="2.7.8.13" evidence="1"/>
<dbReference type="EMBL" id="CP000480">
    <property type="protein sequence ID" value="ABK73185.1"/>
    <property type="molecule type" value="Genomic_DNA"/>
</dbReference>
<dbReference type="EMBL" id="CP001663">
    <property type="protein sequence ID" value="AFP40587.1"/>
    <property type="status" value="ALT_INIT"/>
    <property type="molecule type" value="Genomic_DNA"/>
</dbReference>
<dbReference type="RefSeq" id="WP_003895621.1">
    <property type="nucleotide sequence ID" value="NZ_SIJM01000003.1"/>
</dbReference>
<dbReference type="RefSeq" id="YP_888507.1">
    <property type="nucleotide sequence ID" value="NC_008596.1"/>
</dbReference>
<dbReference type="SMR" id="A0R019"/>
<dbReference type="STRING" id="246196.MSMEG_4230"/>
<dbReference type="PaxDb" id="246196-MSMEI_4130"/>
<dbReference type="GeneID" id="93458948"/>
<dbReference type="KEGG" id="msb:LJ00_20970"/>
<dbReference type="KEGG" id="msg:MSMEI_4130"/>
<dbReference type="KEGG" id="msm:MSMEG_4230"/>
<dbReference type="PATRIC" id="fig|246196.19.peg.4150"/>
<dbReference type="eggNOG" id="COG0472">
    <property type="taxonomic scope" value="Bacteria"/>
</dbReference>
<dbReference type="OrthoDB" id="9805475at2"/>
<dbReference type="UniPathway" id="UPA00219"/>
<dbReference type="Proteomes" id="UP000000757">
    <property type="component" value="Chromosome"/>
</dbReference>
<dbReference type="Proteomes" id="UP000006158">
    <property type="component" value="Chromosome"/>
</dbReference>
<dbReference type="GO" id="GO:0005886">
    <property type="term" value="C:plasma membrane"/>
    <property type="evidence" value="ECO:0007669"/>
    <property type="project" value="UniProtKB-SubCell"/>
</dbReference>
<dbReference type="GO" id="GO:0046872">
    <property type="term" value="F:metal ion binding"/>
    <property type="evidence" value="ECO:0007669"/>
    <property type="project" value="UniProtKB-KW"/>
</dbReference>
<dbReference type="GO" id="GO:0008963">
    <property type="term" value="F:phospho-N-acetylmuramoyl-pentapeptide-transferase activity"/>
    <property type="evidence" value="ECO:0007669"/>
    <property type="project" value="UniProtKB-UniRule"/>
</dbReference>
<dbReference type="GO" id="GO:0051992">
    <property type="term" value="F:UDP-N-acetylmuramoyl-L-alanyl-D-glutamyl-meso-2,6-diaminopimelyl-D-alanyl-D-alanine:undecaprenyl-phosphate transferase activity"/>
    <property type="evidence" value="ECO:0007669"/>
    <property type="project" value="RHEA"/>
</dbReference>
<dbReference type="GO" id="GO:0051301">
    <property type="term" value="P:cell division"/>
    <property type="evidence" value="ECO:0007669"/>
    <property type="project" value="UniProtKB-KW"/>
</dbReference>
<dbReference type="GO" id="GO:0071555">
    <property type="term" value="P:cell wall organization"/>
    <property type="evidence" value="ECO:0007669"/>
    <property type="project" value="UniProtKB-KW"/>
</dbReference>
<dbReference type="GO" id="GO:0009252">
    <property type="term" value="P:peptidoglycan biosynthetic process"/>
    <property type="evidence" value="ECO:0007669"/>
    <property type="project" value="UniProtKB-UniRule"/>
</dbReference>
<dbReference type="GO" id="GO:0008360">
    <property type="term" value="P:regulation of cell shape"/>
    <property type="evidence" value="ECO:0007669"/>
    <property type="project" value="UniProtKB-KW"/>
</dbReference>
<dbReference type="CDD" id="cd06852">
    <property type="entry name" value="GT_MraY"/>
    <property type="match status" value="1"/>
</dbReference>
<dbReference type="HAMAP" id="MF_00038">
    <property type="entry name" value="MraY"/>
    <property type="match status" value="1"/>
</dbReference>
<dbReference type="InterPro" id="IPR000715">
    <property type="entry name" value="Glycosyl_transferase_4"/>
</dbReference>
<dbReference type="InterPro" id="IPR003524">
    <property type="entry name" value="PNAcMuramoyl-5peptid_Trfase"/>
</dbReference>
<dbReference type="InterPro" id="IPR018480">
    <property type="entry name" value="PNAcMuramoyl-5peptid_Trfase_CS"/>
</dbReference>
<dbReference type="NCBIfam" id="TIGR00445">
    <property type="entry name" value="mraY"/>
    <property type="match status" value="1"/>
</dbReference>
<dbReference type="PANTHER" id="PTHR22926">
    <property type="entry name" value="PHOSPHO-N-ACETYLMURAMOYL-PENTAPEPTIDE-TRANSFERASE"/>
    <property type="match status" value="1"/>
</dbReference>
<dbReference type="PANTHER" id="PTHR22926:SF5">
    <property type="entry name" value="PHOSPHO-N-ACETYLMURAMOYL-PENTAPEPTIDE-TRANSFERASE HOMOLOG"/>
    <property type="match status" value="1"/>
</dbReference>
<dbReference type="Pfam" id="PF00953">
    <property type="entry name" value="Glycos_transf_4"/>
    <property type="match status" value="1"/>
</dbReference>
<dbReference type="Pfam" id="PF10555">
    <property type="entry name" value="MraY_sig1"/>
    <property type="match status" value="1"/>
</dbReference>
<dbReference type="PROSITE" id="PS01347">
    <property type="entry name" value="MRAY_1"/>
    <property type="match status" value="1"/>
</dbReference>
<dbReference type="PROSITE" id="PS01348">
    <property type="entry name" value="MRAY_2"/>
    <property type="match status" value="1"/>
</dbReference>
<proteinExistence type="inferred from homology"/>
<accession>A0R019</accession>
<accession>I7G4N2</accession>
<name>MRAY_MYCS2</name>